<sequence>MPTAPLRITVIGSGVIGLSAAHELAAAGHQVTVAYDQELAECVSSVAAAIWFPYHSENSPAADKLLADSLARFEQLSEHPETGIDLRRGLNVDHLPGADRSWTRIVAGTEEASPADLPDGAHAGVWATVPIITMSTYLGWLRGRVEELGADFAKGTVTDLAQLKGGADLVVLAAGLRGGELLGDDDTVYPIRGQVVRLANTKNLTQWLCDDNYPDGVSYIIPRREDIIVGGTDTANDWNREVEPQTSIDILERAAKLVPELEGLEVLEHKVGLRPARETIRLEHVAGHPLPVIAAYGHGGAGVTLSWGTAQRVAELAAQLAGEPAS</sequence>
<evidence type="ECO:0000250" key="1">
    <source>
        <dbReference type="UniProtKB" id="A5U3S4"/>
    </source>
</evidence>
<evidence type="ECO:0000250" key="2">
    <source>
        <dbReference type="UniProtKB" id="P00371"/>
    </source>
</evidence>
<evidence type="ECO:0000250" key="3">
    <source>
        <dbReference type="UniProtKB" id="P14920"/>
    </source>
</evidence>
<evidence type="ECO:0000250" key="4">
    <source>
        <dbReference type="UniProtKB" id="Q1AYM8"/>
    </source>
</evidence>
<evidence type="ECO:0000269" key="5">
    <source>
    </source>
</evidence>
<evidence type="ECO:0000269" key="6">
    <source>
    </source>
</evidence>
<evidence type="ECO:0000269" key="7">
    <source>
    </source>
</evidence>
<evidence type="ECO:0000303" key="8">
    <source>
    </source>
</evidence>
<evidence type="ECO:0000303" key="9">
    <source>
    </source>
</evidence>
<evidence type="ECO:0000305" key="10"/>
<evidence type="ECO:0000305" key="11">
    <source>
    </source>
</evidence>
<evidence type="ECO:0000312" key="12">
    <source>
        <dbReference type="EMBL" id="AAP70489.1"/>
    </source>
</evidence>
<evidence type="ECO:0000312" key="13">
    <source>
        <dbReference type="EMBL" id="AFY17063.1"/>
    </source>
</evidence>
<keyword id="KW-0134">Cell wall</keyword>
<keyword id="KW-0963">Cytoplasm</keyword>
<keyword id="KW-0903">Direct protein sequencing</keyword>
<keyword id="KW-0274">FAD</keyword>
<keyword id="KW-0285">Flavoprotein</keyword>
<keyword id="KW-0560">Oxidoreductase</keyword>
<keyword id="KW-0964">Secreted</keyword>
<comment type="function">
    <text evidence="5 6 7">Catalyzes the oxidative deamination of D-amino acids with broad substrate specificity.</text>
</comment>
<comment type="catalytic activity">
    <reaction evidence="5 6 7">
        <text>a D-alpha-amino acid + O2 + H2O = a 2-oxocarboxylate + H2O2 + NH4(+)</text>
        <dbReference type="Rhea" id="RHEA:21816"/>
        <dbReference type="ChEBI" id="CHEBI:15377"/>
        <dbReference type="ChEBI" id="CHEBI:15379"/>
        <dbReference type="ChEBI" id="CHEBI:16240"/>
        <dbReference type="ChEBI" id="CHEBI:28938"/>
        <dbReference type="ChEBI" id="CHEBI:35179"/>
        <dbReference type="ChEBI" id="CHEBI:59871"/>
        <dbReference type="EC" id="1.4.3.3"/>
    </reaction>
    <physiologicalReaction direction="left-to-right" evidence="5 6 7">
        <dbReference type="Rhea" id="RHEA:21817"/>
    </physiologicalReaction>
</comment>
<comment type="catalytic activity">
    <reaction evidence="5 7">
        <text>D-phenylalanine + O2 + H2O = 3-phenylpyruvate + H2O2 + NH4(+)</text>
        <dbReference type="Rhea" id="RHEA:70963"/>
        <dbReference type="ChEBI" id="CHEBI:15377"/>
        <dbReference type="ChEBI" id="CHEBI:15379"/>
        <dbReference type="ChEBI" id="CHEBI:16240"/>
        <dbReference type="ChEBI" id="CHEBI:18005"/>
        <dbReference type="ChEBI" id="CHEBI:28938"/>
        <dbReference type="ChEBI" id="CHEBI:57981"/>
    </reaction>
    <physiologicalReaction direction="left-to-right" evidence="5 7">
        <dbReference type="Rhea" id="RHEA:70964"/>
    </physiologicalReaction>
</comment>
<comment type="catalytic activity">
    <reaction evidence="5 7">
        <text>D-lysine + O2 + H2O = 6-amino-2-oxohexanoate + H2O2 + NH4(+)</text>
        <dbReference type="Rhea" id="RHEA:37583"/>
        <dbReference type="ChEBI" id="CHEBI:15377"/>
        <dbReference type="ChEBI" id="CHEBI:15379"/>
        <dbReference type="ChEBI" id="CHEBI:16240"/>
        <dbReference type="ChEBI" id="CHEBI:28938"/>
        <dbReference type="ChEBI" id="CHEBI:32557"/>
        <dbReference type="ChEBI" id="CHEBI:58183"/>
        <dbReference type="EC" id="1.4.3.3"/>
    </reaction>
    <physiologicalReaction direction="left-to-right" evidence="5 7">
        <dbReference type="Rhea" id="RHEA:37584"/>
    </physiologicalReaction>
</comment>
<comment type="catalytic activity">
    <reaction evidence="5 6">
        <text>D-methionine + O2 + H2O = 4-methylsulfanyl-2-oxobutanoate + H2O2 + NH4(+)</text>
        <dbReference type="Rhea" id="RHEA:78207"/>
        <dbReference type="ChEBI" id="CHEBI:15377"/>
        <dbReference type="ChEBI" id="CHEBI:15379"/>
        <dbReference type="ChEBI" id="CHEBI:16240"/>
        <dbReference type="ChEBI" id="CHEBI:16723"/>
        <dbReference type="ChEBI" id="CHEBI:28938"/>
        <dbReference type="ChEBI" id="CHEBI:57932"/>
    </reaction>
    <physiologicalReaction direction="left-to-right" evidence="5 6">
        <dbReference type="Rhea" id="RHEA:78208"/>
    </physiologicalReaction>
</comment>
<comment type="catalytic activity">
    <reaction evidence="5 7">
        <text>D-arginine + O2 + H2O = 5-guanidino-2-oxopentanoate + H2O2 + NH4(+)</text>
        <dbReference type="Rhea" id="RHEA:78219"/>
        <dbReference type="ChEBI" id="CHEBI:15377"/>
        <dbReference type="ChEBI" id="CHEBI:15379"/>
        <dbReference type="ChEBI" id="CHEBI:16240"/>
        <dbReference type="ChEBI" id="CHEBI:28938"/>
        <dbReference type="ChEBI" id="CHEBI:32689"/>
        <dbReference type="ChEBI" id="CHEBI:58489"/>
    </reaction>
    <physiologicalReaction direction="left-to-right" evidence="5 7">
        <dbReference type="Rhea" id="RHEA:78220"/>
    </physiologicalReaction>
</comment>
<comment type="catalytic activity">
    <reaction evidence="5 7">
        <text>D-ornithine + O2 + H2O = 5-amino-2-oxopentanoate + H2O2 + NH4(+)</text>
        <dbReference type="Rhea" id="RHEA:78255"/>
        <dbReference type="ChEBI" id="CHEBI:15377"/>
        <dbReference type="ChEBI" id="CHEBI:15379"/>
        <dbReference type="ChEBI" id="CHEBI:16240"/>
        <dbReference type="ChEBI" id="CHEBI:28938"/>
        <dbReference type="ChEBI" id="CHEBI:57668"/>
        <dbReference type="ChEBI" id="CHEBI:58802"/>
    </reaction>
    <physiologicalReaction direction="left-to-right" evidence="5 7">
        <dbReference type="Rhea" id="RHEA:78256"/>
    </physiologicalReaction>
</comment>
<comment type="catalytic activity">
    <reaction evidence="5 7">
        <text>D-leucine + O2 + H2O = 4-methyl-2-oxopentanoate + H2O2 + NH4(+)</text>
        <dbReference type="Rhea" id="RHEA:78211"/>
        <dbReference type="ChEBI" id="CHEBI:15377"/>
        <dbReference type="ChEBI" id="CHEBI:15379"/>
        <dbReference type="ChEBI" id="CHEBI:16240"/>
        <dbReference type="ChEBI" id="CHEBI:17865"/>
        <dbReference type="ChEBI" id="CHEBI:28938"/>
        <dbReference type="ChEBI" id="CHEBI:143079"/>
    </reaction>
    <physiologicalReaction direction="left-to-right" evidence="5 7">
        <dbReference type="Rhea" id="RHEA:78212"/>
    </physiologicalReaction>
</comment>
<comment type="catalytic activity">
    <reaction evidence="7">
        <text>D-alanine + O2 + H2O = pyruvate + H2O2 + NH4(+)</text>
        <dbReference type="Rhea" id="RHEA:22688"/>
        <dbReference type="ChEBI" id="CHEBI:15361"/>
        <dbReference type="ChEBI" id="CHEBI:15377"/>
        <dbReference type="ChEBI" id="CHEBI:15379"/>
        <dbReference type="ChEBI" id="CHEBI:16240"/>
        <dbReference type="ChEBI" id="CHEBI:28938"/>
        <dbReference type="ChEBI" id="CHEBI:57416"/>
    </reaction>
    <physiologicalReaction direction="left-to-right" evidence="7">
        <dbReference type="Rhea" id="RHEA:22689"/>
    </physiologicalReaction>
</comment>
<comment type="catalytic activity">
    <reaction evidence="7">
        <text>D-valine + O2 + H2O = 3-methyl-2-oxobutanoate + H2O2 + NH4(+)</text>
        <dbReference type="Rhea" id="RHEA:78203"/>
        <dbReference type="ChEBI" id="CHEBI:11851"/>
        <dbReference type="ChEBI" id="CHEBI:15377"/>
        <dbReference type="ChEBI" id="CHEBI:15379"/>
        <dbReference type="ChEBI" id="CHEBI:16240"/>
        <dbReference type="ChEBI" id="CHEBI:28938"/>
        <dbReference type="ChEBI" id="CHEBI:74338"/>
    </reaction>
    <physiologicalReaction direction="left-to-right" evidence="7">
        <dbReference type="Rhea" id="RHEA:78204"/>
    </physiologicalReaction>
</comment>
<comment type="catalytic activity">
    <reaction evidence="7">
        <text>D-histidine + O2 + H2O = 3-(imidazol-5-yl)pyruvate + H2O2 + NH4(+)</text>
        <dbReference type="Rhea" id="RHEA:78227"/>
        <dbReference type="ChEBI" id="CHEBI:15377"/>
        <dbReference type="ChEBI" id="CHEBI:15379"/>
        <dbReference type="ChEBI" id="CHEBI:16240"/>
        <dbReference type="ChEBI" id="CHEBI:28938"/>
        <dbReference type="ChEBI" id="CHEBI:58133"/>
        <dbReference type="ChEBI" id="CHEBI:142967"/>
    </reaction>
    <physiologicalReaction direction="left-to-right" evidence="7">
        <dbReference type="Rhea" id="RHEA:78228"/>
    </physiologicalReaction>
</comment>
<comment type="cofactor">
    <cofactor evidence="4">
        <name>FAD</name>
        <dbReference type="ChEBI" id="CHEBI:57692"/>
    </cofactor>
</comment>
<comment type="biophysicochemical properties">
    <kinetics>
        <KM evidence="5">1 mM for D-methionine in strain DSM 15035 (at 30 degrees Celsius and at pH 7.6)</KM>
        <KM evidence="7">1.74 mM for D-methionine in strain DSM 15035 (at 30 degrees Celsius and at pH 9)</KM>
        <KM evidence="7">0.84 mM for D-methionine in strain DSM 20168 (at 30 degrees Celsius and at pH 9)</KM>
        <KM evidence="7">4.98 mM for D-phenylalanine in strain DSM 15035 (at 30 degrees Celsius and at pH 9)</KM>
        <KM evidence="7">1.69 mM for D-phenylalanine in strain DSM 20168 (at 30 degrees Celsius and at pH 9)</KM>
        <KM evidence="6">0.026 mM for oxygen (at 30 degrees Celsius and at pH 7.6)</KM>
        <text evidence="7">kcat is 17.92 sec(-1) with D-methionine as substrate in strain DSM 15035 (at 30 degrees Celsius and at pH 9) (PubMed:36889103). kcat is 23.23 sec(-1) with D-methionine as substrate in strain DSM 20168 (at 30 degrees Celsius and at pH 9) (PubMed:36889103). kcat is 24.31 sec(-1) with D-phenylalanine as substrate in strain DSM 15035 (at 30 degrees Celsius and at pH 9) (PubMed:36889103). kcat is 13.04 sec(-1) with D-phenylalanine as substrate in strain DSM 20168 (at 30 degrees Celsius and at pH 9) (PubMed:36889103).</text>
    </kinetics>
    <phDependence>
        <text evidence="5 7">Optimum pH is 6.5-9.2.</text>
    </phDependence>
    <temperatureDependence>
        <text evidence="7">Optimum temperature is 30 degrees Celsius.</text>
    </temperatureDependence>
</comment>
<comment type="subunit">
    <text evidence="5">Homodimer.</text>
</comment>
<comment type="subcellular location">
    <subcellularLocation>
        <location evidence="1">Cytoplasm</location>
    </subcellularLocation>
    <subcellularLocation>
        <location evidence="1">Secreted</location>
        <location evidence="1">Cell wall</location>
    </subcellularLocation>
</comment>
<comment type="similarity">
    <text evidence="10">Belongs to the DAMOX/DASOX family.</text>
</comment>
<reference evidence="12" key="1">
    <citation type="journal article" date="2007" name="Appl. Microbiol. Biotechnol.">
        <title>Overproduction and characterization of a recombinant D-amino acid oxidase from Arthrobacter protophormiae.</title>
        <authorList>
            <person name="Geueke B."/>
            <person name="Weckbecker A."/>
            <person name="Hummel W."/>
        </authorList>
    </citation>
    <scope>NUCLEOTIDE SEQUENCE [GENOMIC DNA]</scope>
    <scope>PROTEIN SEQUENCE OF 2-21 AND 257-270</scope>
    <scope>FUNCTION</scope>
    <scope>CATALYTIC ACTIVITY</scope>
    <scope>BIOPHYSICOCHEMICAL PROPERTIES</scope>
    <scope>SUBUNIT</scope>
    <source>
        <strain evidence="8">DSM 15035</strain>
    </source>
</reference>
<reference evidence="13" key="2">
    <citation type="journal article" date="2023" name="Enzyme Microb. Technol.">
        <title>Enhancement in the catalytic efficiency of D-amino acid oxidase from Glutamicibacter protophormiae by multiple amino acid substitutions.</title>
        <authorList>
            <person name="Xu S."/>
            <person name="Chu M."/>
            <person name="Zhang F."/>
            <person name="Zhao J."/>
            <person name="Zhang J."/>
            <person name="Cao Y."/>
            <person name="He G."/>
            <person name="Israr M."/>
            <person name="Zhao B."/>
            <person name="Ju J."/>
        </authorList>
    </citation>
    <scope>NUCLEOTIDE SEQUENCE [GENOMIC DNA]</scope>
    <scope>FUNCTION</scope>
    <scope>CATALYTIC ACTIVITY</scope>
    <scope>BIOPHYSICOCHEMICAL PROPERTIES</scope>
    <scope>MUTAGENESIS OF LYS-256</scope>
    <source>
        <strain evidence="9">DSM 15035</strain>
        <strain evidence="9">DSM 20168</strain>
    </source>
</reference>
<reference evidence="10" key="3">
    <citation type="journal article" date="2014" name="Appl. Biochem. Biotechnol.">
        <title>A mathematical model of oxidative deamination of amino acid catalyzed by two D-amino acid oxidases and influence of aeration on enzyme stability.</title>
        <authorList>
            <person name="Findrik Z."/>
            <person name="Valentovic I."/>
            <person name="Vasic-Racki D."/>
        </authorList>
    </citation>
    <scope>FUNCTION</scope>
    <scope>CATALYTIC ACTIVITY</scope>
    <scope>BIOPHYSICOCHEMICAL PROPERTIES</scope>
</reference>
<protein>
    <recommendedName>
        <fullName evidence="8">D-amino-acid oxidase</fullName>
        <shortName evidence="8">DAAO</shortName>
        <shortName evidence="10">DAMOX</shortName>
        <shortName evidence="10">DAO</shortName>
        <ecNumber evidence="5 6 7">1.4.3.3</ecNumber>
    </recommendedName>
    <alternativeName>
        <fullName evidence="9">GpDAAO-1</fullName>
    </alternativeName>
    <alternativeName>
        <fullName evidence="9">GpDAAO-2</fullName>
    </alternativeName>
</protein>
<proteinExistence type="evidence at protein level"/>
<name>DAO_GLUPR</name>
<feature type="initiator methionine" description="Removed" evidence="11">
    <location>
        <position position="1"/>
    </location>
</feature>
<feature type="chain" id="PRO_0000460376" description="D-amino-acid oxidase">
    <location>
        <begin position="2"/>
        <end position="326"/>
    </location>
</feature>
<feature type="binding site" evidence="3">
    <location>
        <position position="14"/>
    </location>
    <ligand>
        <name>FAD</name>
        <dbReference type="ChEBI" id="CHEBI:57692"/>
    </ligand>
</feature>
<feature type="binding site" evidence="3">
    <location>
        <position position="15"/>
    </location>
    <ligand>
        <name>FAD</name>
        <dbReference type="ChEBI" id="CHEBI:57692"/>
    </ligand>
</feature>
<feature type="binding site" evidence="3">
    <location>
        <position position="16"/>
    </location>
    <ligand>
        <name>FAD</name>
        <dbReference type="ChEBI" id="CHEBI:57692"/>
    </ligand>
</feature>
<feature type="binding site" evidence="3">
    <location>
        <position position="36"/>
    </location>
    <ligand>
        <name>FAD</name>
        <dbReference type="ChEBI" id="CHEBI:57692"/>
    </ligand>
</feature>
<feature type="binding site" evidence="3">
    <location>
        <position position="44"/>
    </location>
    <ligand>
        <name>FAD</name>
        <dbReference type="ChEBI" id="CHEBI:57692"/>
    </ligand>
</feature>
<feature type="binding site" evidence="2">
    <location>
        <position position="48"/>
    </location>
    <ligand>
        <name>FAD</name>
        <dbReference type="ChEBI" id="CHEBI:57692"/>
    </ligand>
</feature>
<feature type="binding site" evidence="3">
    <location>
        <position position="49"/>
    </location>
    <ligand>
        <name>FAD</name>
        <dbReference type="ChEBI" id="CHEBI:57692"/>
    </ligand>
</feature>
<feature type="binding site" evidence="3">
    <location>
        <position position="50"/>
    </location>
    <ligand>
        <name>FAD</name>
        <dbReference type="ChEBI" id="CHEBI:57692"/>
    </ligand>
</feature>
<feature type="binding site" evidence="3">
    <location>
        <position position="157"/>
    </location>
    <ligand>
        <name>FAD</name>
        <dbReference type="ChEBI" id="CHEBI:57692"/>
    </ligand>
</feature>
<feature type="binding site" evidence="2">
    <location>
        <position position="219"/>
    </location>
    <ligand>
        <name>D-proline</name>
        <dbReference type="ChEBI" id="CHEBI:57726"/>
    </ligand>
</feature>
<feature type="binding site" evidence="3">
    <location>
        <position position="219"/>
    </location>
    <ligand>
        <name>D-serine</name>
        <dbReference type="ChEBI" id="CHEBI:35247"/>
    </ligand>
</feature>
<feature type="binding site" evidence="2">
    <location>
        <position position="274"/>
    </location>
    <ligand>
        <name>D-proline</name>
        <dbReference type="ChEBI" id="CHEBI:57726"/>
    </ligand>
</feature>
<feature type="binding site" evidence="3">
    <location>
        <position position="274"/>
    </location>
    <ligand>
        <name>D-serine</name>
        <dbReference type="ChEBI" id="CHEBI:35247"/>
    </ligand>
</feature>
<feature type="binding site" evidence="3">
    <location>
        <position position="274"/>
    </location>
    <ligand>
        <name>FAD</name>
        <dbReference type="ChEBI" id="CHEBI:57692"/>
    </ligand>
</feature>
<feature type="binding site" evidence="3">
    <location>
        <position position="299"/>
    </location>
    <ligand>
        <name>FAD</name>
        <dbReference type="ChEBI" id="CHEBI:57692"/>
    </ligand>
</feature>
<feature type="binding site" evidence="2">
    <location>
        <position position="300"/>
    </location>
    <ligand>
        <name>D-proline</name>
        <dbReference type="ChEBI" id="CHEBI:57726"/>
    </ligand>
</feature>
<feature type="binding site" evidence="3">
    <location>
        <position position="300"/>
    </location>
    <ligand>
        <name>D-serine</name>
        <dbReference type="ChEBI" id="CHEBI:35247"/>
    </ligand>
</feature>
<feature type="binding site" evidence="3">
    <location>
        <position position="300"/>
    </location>
    <ligand>
        <name>FAD</name>
        <dbReference type="ChEBI" id="CHEBI:57692"/>
    </ligand>
</feature>
<feature type="binding site" evidence="3">
    <location>
        <position position="302"/>
    </location>
    <ligand>
        <name>FAD</name>
        <dbReference type="ChEBI" id="CHEBI:57692"/>
    </ligand>
</feature>
<feature type="binding site" evidence="3">
    <location>
        <position position="304"/>
    </location>
    <ligand>
        <name>FAD</name>
        <dbReference type="ChEBI" id="CHEBI:57692"/>
    </ligand>
</feature>
<feature type="mutagenesis site" description="Improves catalytic efficiency." evidence="7">
    <original>K</original>
    <variation>T</variation>
    <location>
        <position position="256"/>
    </location>
</feature>
<feature type="sequence conflict" description="In Ref. 2; AFY17063." evidence="10" ref="2">
    <original>PADLPD</original>
    <variation>REDLPN</variation>
    <location>
        <begin position="114"/>
        <end position="119"/>
    </location>
</feature>
<feature type="sequence conflict" description="In Ref. 2; AFY17063." evidence="10" ref="2">
    <original>K</original>
    <variation>T</variation>
    <location>
        <position position="256"/>
    </location>
</feature>
<feature type="sequence conflict" description="In Ref. 2; AFY17063." evidence="10" ref="2">
    <original>A</original>
    <variation>T</variation>
    <location>
        <position position="286"/>
    </location>
</feature>
<accession>Q7X2D3</accession>
<accession>K9ND24</accession>
<dbReference type="EC" id="1.4.3.3" evidence="5 6 7"/>
<dbReference type="EMBL" id="AY306197">
    <property type="protein sequence ID" value="AAP70489.1"/>
    <property type="molecule type" value="Genomic_DNA"/>
</dbReference>
<dbReference type="EMBL" id="JX855922">
    <property type="protein sequence ID" value="AFY17063.1"/>
    <property type="molecule type" value="Genomic_DNA"/>
</dbReference>
<dbReference type="SMR" id="Q7X2D3"/>
<dbReference type="BRENDA" id="1.4.3.3">
    <property type="organism ID" value="453"/>
</dbReference>
<dbReference type="GO" id="GO:0005737">
    <property type="term" value="C:cytoplasm"/>
    <property type="evidence" value="ECO:0000250"/>
    <property type="project" value="UniProtKB"/>
</dbReference>
<dbReference type="GO" id="GO:0005576">
    <property type="term" value="C:extracellular region"/>
    <property type="evidence" value="ECO:0007669"/>
    <property type="project" value="UniProtKB-KW"/>
</dbReference>
<dbReference type="GO" id="GO:0009274">
    <property type="term" value="C:peptidoglycan-based cell wall"/>
    <property type="evidence" value="ECO:0000250"/>
    <property type="project" value="UniProtKB"/>
</dbReference>
<dbReference type="GO" id="GO:0003884">
    <property type="term" value="F:D-amino-acid oxidase activity"/>
    <property type="evidence" value="ECO:0000314"/>
    <property type="project" value="UniProtKB"/>
</dbReference>
<dbReference type="GO" id="GO:0071949">
    <property type="term" value="F:FAD binding"/>
    <property type="evidence" value="ECO:0000250"/>
    <property type="project" value="UniProtKB"/>
</dbReference>
<dbReference type="GO" id="GO:0043799">
    <property type="term" value="F:glycine oxidase activity"/>
    <property type="evidence" value="ECO:0007669"/>
    <property type="project" value="RHEA"/>
</dbReference>
<dbReference type="GO" id="GO:0019478">
    <property type="term" value="P:D-amino acid catabolic process"/>
    <property type="evidence" value="ECO:0000314"/>
    <property type="project" value="UniProtKB"/>
</dbReference>
<dbReference type="Gene3D" id="3.30.9.10">
    <property type="entry name" value="D-Amino Acid Oxidase, subunit A, domain 2"/>
    <property type="match status" value="1"/>
</dbReference>
<dbReference type="Gene3D" id="3.40.50.720">
    <property type="entry name" value="NAD(P)-binding Rossmann-like Domain"/>
    <property type="match status" value="1"/>
</dbReference>
<dbReference type="InterPro" id="IPR023209">
    <property type="entry name" value="DAO"/>
</dbReference>
<dbReference type="InterPro" id="IPR006076">
    <property type="entry name" value="FAD-dep_OxRdtase"/>
</dbReference>
<dbReference type="PANTHER" id="PTHR11530">
    <property type="entry name" value="D-AMINO ACID OXIDASE"/>
    <property type="match status" value="1"/>
</dbReference>
<dbReference type="PANTHER" id="PTHR11530:SF11">
    <property type="entry name" value="D-ASPARTATE OXIDASE"/>
    <property type="match status" value="1"/>
</dbReference>
<dbReference type="Pfam" id="PF01266">
    <property type="entry name" value="DAO"/>
    <property type="match status" value="1"/>
</dbReference>
<dbReference type="PIRSF" id="PIRSF000189">
    <property type="entry name" value="D-aa_oxidase"/>
    <property type="match status" value="1"/>
</dbReference>
<dbReference type="SUPFAM" id="SSF54373">
    <property type="entry name" value="FAD-linked reductases, C-terminal domain"/>
    <property type="match status" value="1"/>
</dbReference>
<dbReference type="SUPFAM" id="SSF51971">
    <property type="entry name" value="Nucleotide-binding domain"/>
    <property type="match status" value="1"/>
</dbReference>
<gene>
    <name evidence="10" type="primary">dao</name>
</gene>
<organism>
    <name type="scientific">Glutamicibacter protophormiae</name>
    <name type="common">Brevibacterium protophormiae</name>
    <dbReference type="NCBI Taxonomy" id="37930"/>
    <lineage>
        <taxon>Bacteria</taxon>
        <taxon>Bacillati</taxon>
        <taxon>Actinomycetota</taxon>
        <taxon>Actinomycetes</taxon>
        <taxon>Micrococcales</taxon>
        <taxon>Micrococcaceae</taxon>
        <taxon>Glutamicibacter</taxon>
    </lineage>
</organism>